<dbReference type="EC" id="3.4.21.105"/>
<dbReference type="EMBL" id="L42023">
    <property type="protein sequence ID" value="AAC22277.1"/>
    <property type="molecule type" value="Genomic_DNA"/>
</dbReference>
<dbReference type="PIR" id="I64081">
    <property type="entry name" value="I64081"/>
</dbReference>
<dbReference type="RefSeq" id="NP_438776.1">
    <property type="nucleotide sequence ID" value="NC_000907.1"/>
</dbReference>
<dbReference type="PDB" id="2NR9">
    <property type="method" value="X-ray"/>
    <property type="resolution" value="2.20 A"/>
    <property type="chains" value="A=1-192"/>
</dbReference>
<dbReference type="PDB" id="3ODJ">
    <property type="method" value="X-ray"/>
    <property type="resolution" value="2.84 A"/>
    <property type="chains" value="A=1-192"/>
</dbReference>
<dbReference type="PDBsum" id="2NR9"/>
<dbReference type="PDBsum" id="3ODJ"/>
<dbReference type="PCDDB" id="P44783"/>
<dbReference type="SMR" id="P44783"/>
<dbReference type="IntAct" id="P44783">
    <property type="interactions" value="1"/>
</dbReference>
<dbReference type="MINT" id="P44783"/>
<dbReference type="STRING" id="71421.HI_0618"/>
<dbReference type="DrugBank" id="DB08367">
    <property type="generic name" value="(R)-2-(FORMYLOXY)-3-(PHOSPHONOOXY)PROPYL PENTANOATE"/>
</dbReference>
<dbReference type="MEROPS" id="S54.024"/>
<dbReference type="TCDB" id="9.B.104.1.7">
    <property type="family name" value="the rhomboid protease (rhomboid) family"/>
</dbReference>
<dbReference type="EnsemblBacteria" id="AAC22277">
    <property type="protein sequence ID" value="AAC22277"/>
    <property type="gene ID" value="HI_0618"/>
</dbReference>
<dbReference type="KEGG" id="hin:HI_0618"/>
<dbReference type="PATRIC" id="fig|71421.8.peg.642"/>
<dbReference type="eggNOG" id="COG0705">
    <property type="taxonomic scope" value="Bacteria"/>
</dbReference>
<dbReference type="HOGENOM" id="CLU_121865_0_0_6"/>
<dbReference type="OrthoDB" id="9778341at2"/>
<dbReference type="PhylomeDB" id="P44783"/>
<dbReference type="BioCyc" id="HINF71421:G1GJ1-639-MONOMER"/>
<dbReference type="BRENDA" id="3.4.21.105">
    <property type="organism ID" value="2529"/>
</dbReference>
<dbReference type="EvolutionaryTrace" id="P44783"/>
<dbReference type="Proteomes" id="UP000000579">
    <property type="component" value="Chromosome"/>
</dbReference>
<dbReference type="GO" id="GO:0005886">
    <property type="term" value="C:plasma membrane"/>
    <property type="evidence" value="ECO:0007669"/>
    <property type="project" value="UniProtKB-SubCell"/>
</dbReference>
<dbReference type="GO" id="GO:0042802">
    <property type="term" value="F:identical protein binding"/>
    <property type="evidence" value="ECO:0000353"/>
    <property type="project" value="IntAct"/>
</dbReference>
<dbReference type="GO" id="GO:0004252">
    <property type="term" value="F:serine-type endopeptidase activity"/>
    <property type="evidence" value="ECO:0000318"/>
    <property type="project" value="GO_Central"/>
</dbReference>
<dbReference type="GO" id="GO:0006508">
    <property type="term" value="P:proteolysis"/>
    <property type="evidence" value="ECO:0007669"/>
    <property type="project" value="UniProtKB-KW"/>
</dbReference>
<dbReference type="Gene3D" id="1.20.1540.10">
    <property type="entry name" value="Rhomboid-like"/>
    <property type="match status" value="1"/>
</dbReference>
<dbReference type="InterPro" id="IPR022764">
    <property type="entry name" value="Peptidase_S54_rhomboid_dom"/>
</dbReference>
<dbReference type="InterPro" id="IPR035952">
    <property type="entry name" value="Rhomboid-like_sf"/>
</dbReference>
<dbReference type="PANTHER" id="PTHR43066:SF26">
    <property type="entry name" value="RHOMBOID PROTEASE GLPG"/>
    <property type="match status" value="1"/>
</dbReference>
<dbReference type="PANTHER" id="PTHR43066">
    <property type="entry name" value="RHOMBOID-RELATED PROTEIN"/>
    <property type="match status" value="1"/>
</dbReference>
<dbReference type="Pfam" id="PF01694">
    <property type="entry name" value="Rhomboid"/>
    <property type="match status" value="1"/>
</dbReference>
<dbReference type="SUPFAM" id="SSF144091">
    <property type="entry name" value="Rhomboid-like"/>
    <property type="match status" value="1"/>
</dbReference>
<feature type="chain" id="PRO_0000087516" description="Rhomboid protease GlpG">
    <location>
        <begin position="1"/>
        <end position="192"/>
    </location>
</feature>
<feature type="topological domain" description="Cytoplasmic" evidence="2">
    <location>
        <begin position="1"/>
        <end position="10"/>
    </location>
</feature>
<feature type="transmembrane region" description="Helical; Name=1" evidence="2">
    <location>
        <begin position="11"/>
        <end position="31"/>
    </location>
</feature>
<feature type="topological domain" description="Periplasmic" evidence="2">
    <location>
        <begin position="32"/>
        <end position="57"/>
    </location>
</feature>
<feature type="transmembrane region" description="Helical; Name=2" evidence="2">
    <location>
        <begin position="58"/>
        <end position="78"/>
    </location>
</feature>
<feature type="topological domain" description="Cytoplasmic" evidence="2">
    <location>
        <begin position="79"/>
        <end position="82"/>
    </location>
</feature>
<feature type="transmembrane region" description="Helical; Name=3" evidence="2">
    <location>
        <begin position="83"/>
        <end position="103"/>
    </location>
</feature>
<feature type="topological domain" description="Periplasmic" evidence="2">
    <location>
        <begin position="104"/>
        <end position="107"/>
    </location>
</feature>
<feature type="transmembrane region" description="Helical; Name=4" evidence="2">
    <location>
        <begin position="108"/>
        <end position="128"/>
    </location>
</feature>
<feature type="topological domain" description="Cytoplasmic" evidence="2">
    <location>
        <begin position="129"/>
        <end position="141"/>
    </location>
</feature>
<feature type="transmembrane region" description="Helical; Name=5" evidence="2">
    <location>
        <begin position="142"/>
        <end position="162"/>
    </location>
</feature>
<feature type="topological domain" description="Periplasmic" evidence="2">
    <location>
        <position position="163"/>
    </location>
</feature>
<feature type="transmembrane region" description="Helical; Name=6" evidence="2">
    <location>
        <begin position="164"/>
        <end position="184"/>
    </location>
</feature>
<feature type="topological domain" description="Cytoplasmic" evidence="2">
    <location>
        <begin position="185"/>
        <end position="192"/>
    </location>
</feature>
<feature type="active site" description="Nucleophile" evidence="3">
    <location>
        <position position="116"/>
    </location>
</feature>
<feature type="active site" evidence="3">
    <location>
        <position position="169"/>
    </location>
</feature>
<feature type="helix" evidence="5">
    <location>
        <begin position="10"/>
        <end position="27"/>
    </location>
</feature>
<feature type="helix" evidence="5">
    <location>
        <begin position="31"/>
        <end position="38"/>
    </location>
</feature>
<feature type="helix" evidence="5">
    <location>
        <begin position="44"/>
        <end position="48"/>
    </location>
</feature>
<feature type="helix" evidence="5">
    <location>
        <begin position="52"/>
        <end position="55"/>
    </location>
</feature>
<feature type="helix" evidence="5">
    <location>
        <begin position="56"/>
        <end position="58"/>
    </location>
</feature>
<feature type="helix" evidence="5">
    <location>
        <begin position="63"/>
        <end position="84"/>
    </location>
</feature>
<feature type="helix" evidence="5">
    <location>
        <begin position="86"/>
        <end position="108"/>
    </location>
</feature>
<feature type="helix" evidence="5">
    <location>
        <begin position="116"/>
        <end position="131"/>
    </location>
</feature>
<feature type="turn" evidence="5">
    <location>
        <begin position="144"/>
        <end position="148"/>
    </location>
</feature>
<feature type="turn" evidence="5">
    <location>
        <begin position="150"/>
        <end position="152"/>
    </location>
</feature>
<feature type="helix" evidence="5">
    <location>
        <begin position="153"/>
        <end position="156"/>
    </location>
</feature>
<feature type="helix" evidence="5">
    <location>
        <begin position="166"/>
        <end position="191"/>
    </location>
</feature>
<sequence>MKNFLAQQGKITLILTALCVLIYLAQQLGFEDDIMYLMHYPAYEEQDSEVWRYISHTLVHLSNLHILFNLSWFFIFGGMIERTFGSVKLLMLYVVASAITGYVQNYVSGPAFFGLSGVVYAVLGYVFIRDKLNHHLFDLPEGFFTMLLVGIALGFISPLFGVEMGNAAHISGLIVGLIWGFIDSKLRKNSLE</sequence>
<protein>
    <recommendedName>
        <fullName>Rhomboid protease GlpG</fullName>
        <ecNumber>3.4.21.105</ecNumber>
    </recommendedName>
    <alternativeName>
        <fullName>Intramembrane serine protease</fullName>
    </alternativeName>
</protein>
<accession>P44783</accession>
<name>GLPG_HAEIN</name>
<proteinExistence type="evidence at protein level"/>
<comment type="function">
    <text evidence="1">Rhomboid-type serine protease that catalyzes intramembrane proteolysis.</text>
</comment>
<comment type="catalytic activity">
    <reaction>
        <text>Cleaves type-1 transmembrane domains using a catalytic dyad composed of serine and histidine that are contributed by different transmembrane domains.</text>
        <dbReference type="EC" id="3.4.21.105"/>
    </reaction>
</comment>
<comment type="interaction">
    <interactant intactId="EBI-10098079">
        <id>P44783</id>
    </interactant>
    <interactant intactId="EBI-10098079">
        <id>P44783</id>
        <label>glpG</label>
    </interactant>
    <organismsDiffer>false</organismsDiffer>
    <experiments>2</experiments>
</comment>
<comment type="subcellular location">
    <subcellularLocation>
        <location evidence="3">Cell inner membrane</location>
        <topology evidence="3">Multi-pass membrane protein</topology>
    </subcellularLocation>
</comment>
<comment type="similarity">
    <text evidence="4">Belongs to the peptidase S54 family.</text>
</comment>
<evidence type="ECO:0000250" key="1"/>
<evidence type="ECO:0000255" key="2"/>
<evidence type="ECO:0000269" key="3">
    <source>
    </source>
</evidence>
<evidence type="ECO:0000305" key="4"/>
<evidence type="ECO:0007829" key="5">
    <source>
        <dbReference type="PDB" id="2NR9"/>
    </source>
</evidence>
<gene>
    <name type="primary">glpG</name>
    <name type="ordered locus">HI_0618</name>
</gene>
<organism>
    <name type="scientific">Haemophilus influenzae (strain ATCC 51907 / DSM 11121 / KW20 / Rd)</name>
    <dbReference type="NCBI Taxonomy" id="71421"/>
    <lineage>
        <taxon>Bacteria</taxon>
        <taxon>Pseudomonadati</taxon>
        <taxon>Pseudomonadota</taxon>
        <taxon>Gammaproteobacteria</taxon>
        <taxon>Pasteurellales</taxon>
        <taxon>Pasteurellaceae</taxon>
        <taxon>Haemophilus</taxon>
    </lineage>
</organism>
<reference key="1">
    <citation type="journal article" date="1995" name="Science">
        <title>Whole-genome random sequencing and assembly of Haemophilus influenzae Rd.</title>
        <authorList>
            <person name="Fleischmann R.D."/>
            <person name="Adams M.D."/>
            <person name="White O."/>
            <person name="Clayton R.A."/>
            <person name="Kirkness E.F."/>
            <person name="Kerlavage A.R."/>
            <person name="Bult C.J."/>
            <person name="Tomb J.-F."/>
            <person name="Dougherty B.A."/>
            <person name="Merrick J.M."/>
            <person name="McKenney K."/>
            <person name="Sutton G.G."/>
            <person name="FitzHugh W."/>
            <person name="Fields C.A."/>
            <person name="Gocayne J.D."/>
            <person name="Scott J.D."/>
            <person name="Shirley R."/>
            <person name="Liu L.-I."/>
            <person name="Glodek A."/>
            <person name="Kelley J.M."/>
            <person name="Weidman J.F."/>
            <person name="Phillips C.A."/>
            <person name="Spriggs T."/>
            <person name="Hedblom E."/>
            <person name="Cotton M.D."/>
            <person name="Utterback T.R."/>
            <person name="Hanna M.C."/>
            <person name="Nguyen D.T."/>
            <person name="Saudek D.M."/>
            <person name="Brandon R.C."/>
            <person name="Fine L.D."/>
            <person name="Fritchman J.L."/>
            <person name="Fuhrmann J.L."/>
            <person name="Geoghagen N.S.M."/>
            <person name="Gnehm C.L."/>
            <person name="McDonald L.A."/>
            <person name="Small K.V."/>
            <person name="Fraser C.M."/>
            <person name="Smith H.O."/>
            <person name="Venter J.C."/>
        </authorList>
    </citation>
    <scope>NUCLEOTIDE SEQUENCE [LARGE SCALE GENOMIC DNA]</scope>
    <source>
        <strain>ATCC 51907 / DSM 11121 / KW20 / Rd</strain>
    </source>
</reference>
<reference key="2">
    <citation type="journal article" date="2007" name="Proc. Natl. Acad. Sci. U.S.A.">
        <title>The crystal structure of the rhomboid peptidase from Haemophilus influenzae provides insight into intramembrane proteolysis.</title>
        <authorList>
            <person name="Lemieux M.J."/>
            <person name="Fischer S.J."/>
            <person name="Cherney M.M."/>
            <person name="Bateman K.S."/>
            <person name="James M.N.G."/>
        </authorList>
    </citation>
    <scope>X-RAY CRYSTALLOGRAPHY (2.2 ANGSTROMS)</scope>
    <scope>ACTIVE SITE</scope>
    <scope>REACTION MECHANISM</scope>
    <scope>SUBCELLULAR LOCATION</scope>
</reference>
<keyword id="KW-0002">3D-structure</keyword>
<keyword id="KW-0997">Cell inner membrane</keyword>
<keyword id="KW-1003">Cell membrane</keyword>
<keyword id="KW-0378">Hydrolase</keyword>
<keyword id="KW-0472">Membrane</keyword>
<keyword id="KW-0645">Protease</keyword>
<keyword id="KW-1185">Reference proteome</keyword>
<keyword id="KW-0720">Serine protease</keyword>
<keyword id="KW-0812">Transmembrane</keyword>
<keyword id="KW-1133">Transmembrane helix</keyword>